<evidence type="ECO:0000250" key="1"/>
<evidence type="ECO:0000250" key="2">
    <source>
        <dbReference type="UniProtKB" id="Q9Y2K7"/>
    </source>
</evidence>
<evidence type="ECO:0000255" key="3"/>
<evidence type="ECO:0000255" key="4">
    <source>
        <dbReference type="PROSITE-ProRule" id="PRU00146"/>
    </source>
</evidence>
<evidence type="ECO:0000255" key="5">
    <source>
        <dbReference type="PROSITE-ProRule" id="PRU00509"/>
    </source>
</evidence>
<evidence type="ECO:0000255" key="6">
    <source>
        <dbReference type="PROSITE-ProRule" id="PRU00538"/>
    </source>
</evidence>
<evidence type="ECO:0000256" key="7">
    <source>
        <dbReference type="SAM" id="MobiDB-lite"/>
    </source>
</evidence>
<evidence type="ECO:0000269" key="8">
    <source>
    </source>
</evidence>
<evidence type="ECO:0000269" key="9">
    <source>
    </source>
</evidence>
<evidence type="ECO:0000269" key="10">
    <source>
    </source>
</evidence>
<evidence type="ECO:0000269" key="11">
    <source>
    </source>
</evidence>
<evidence type="ECO:0000269" key="12">
    <source>
    </source>
</evidence>
<evidence type="ECO:0000269" key="13">
    <source>
    </source>
</evidence>
<evidence type="ECO:0000303" key="14">
    <source>
    </source>
</evidence>
<evidence type="ECO:0000303" key="15">
    <source>
    </source>
</evidence>
<evidence type="ECO:0000303" key="16">
    <source>
    </source>
</evidence>
<evidence type="ECO:0000303" key="17">
    <source>
    </source>
</evidence>
<evidence type="ECO:0000303" key="18">
    <source ref="6"/>
</evidence>
<evidence type="ECO:0000305" key="19"/>
<evidence type="ECO:0007744" key="20">
    <source>
        <dbReference type="PDB" id="4O64"/>
    </source>
</evidence>
<evidence type="ECO:0007744" key="21">
    <source>
        <dbReference type="PDB" id="5JH5"/>
    </source>
</evidence>
<evidence type="ECO:0007744" key="22">
    <source>
        <dbReference type="PDB" id="6BVA"/>
    </source>
</evidence>
<evidence type="ECO:0007744" key="23">
    <source>
    </source>
</evidence>
<evidence type="ECO:0007744" key="24">
    <source>
    </source>
</evidence>
<evidence type="ECO:0007744" key="25">
    <source>
    </source>
</evidence>
<evidence type="ECO:0007744" key="26">
    <source>
    </source>
</evidence>
<evidence type="ECO:0007744" key="27">
    <source>
    </source>
</evidence>
<evidence type="ECO:0007744" key="28">
    <source>
    </source>
</evidence>
<evidence type="ECO:0007744" key="29">
    <source>
    </source>
</evidence>
<evidence type="ECO:0007829" key="30">
    <source>
        <dbReference type="PDB" id="4O64"/>
    </source>
</evidence>
<evidence type="ECO:0007829" key="31">
    <source>
        <dbReference type="PDB" id="5JH5"/>
    </source>
</evidence>
<evidence type="ECO:0007829" key="32">
    <source>
        <dbReference type="PDB" id="8HCU"/>
    </source>
</evidence>
<comment type="function">
    <text evidence="8 9 10 19">Histone demethylase that demethylates 'Lys-4' and 'Lys-36' of histone H3, thereby playing a central role in histone code (PubMed:16362057, PubMed:17994099, PubMed:26237645). Preferentially demethylates trimethylated H3 'Lys-4' and dimethylated H3 'Lys-36' residue while it has weak or no activity for mono- and tri-methylated H3 'Lys-36' (PubMed:16362057, PubMed:17994099, PubMed:26237645). Preferentially binds the transcribed region of ribosomal RNA and represses the transcription of ribosomal RNA genes which inhibits cell growth and proliferation (PubMed:16362057, PubMed:17994099). May also serve as a substrate-recognition component of the SCF (SKP1-CUL1-F-box protein)-type E3 ubiquitin ligase complex (Probable).</text>
</comment>
<comment type="catalytic activity">
    <reaction evidence="8 10">
        <text>N(6),N(6)-dimethyl-L-lysyl(36)-[histone H3] + 2 2-oxoglutarate + 2 O2 = L-lysyl(36)-[histone H3] + 2 formaldehyde + 2 succinate + 2 CO2</text>
        <dbReference type="Rhea" id="RHEA:42032"/>
        <dbReference type="Rhea" id="RHEA-COMP:9785"/>
        <dbReference type="Rhea" id="RHEA-COMP:9787"/>
        <dbReference type="ChEBI" id="CHEBI:15379"/>
        <dbReference type="ChEBI" id="CHEBI:16526"/>
        <dbReference type="ChEBI" id="CHEBI:16810"/>
        <dbReference type="ChEBI" id="CHEBI:16842"/>
        <dbReference type="ChEBI" id="CHEBI:29969"/>
        <dbReference type="ChEBI" id="CHEBI:30031"/>
        <dbReference type="ChEBI" id="CHEBI:61976"/>
        <dbReference type="EC" id="1.14.11.27"/>
    </reaction>
</comment>
<comment type="cofactor">
    <cofactor>
        <name>Fe(2+)</name>
        <dbReference type="ChEBI" id="CHEBI:29033"/>
    </cofactor>
    <text evidence="2">Binds 1 Fe(2+) ion per subunit.</text>
</comment>
<comment type="activity regulation">
    <text evidence="10">Histone demethylase activity is inhibited by fumarate.</text>
</comment>
<comment type="subunit">
    <text evidence="11 13 19">Interacts with SKP1, forming heterodimers (PubMed:27568929). The heterodimeric KDM2B-SKP1 complex interacts with the PCGF1-BCORL1 heterodimeric complex to form a homotetrameric polycomb repression complex 1 (PRC1.1) (PubMed:27568929). Directly interacts with CUL1. The SKP1-KDM2B complex interacts with UBB (PubMed:30033217).</text>
</comment>
<comment type="interaction">
    <interactant intactId="EBI-3955564">
        <id>Q8NHM5</id>
    </interactant>
    <interactant intactId="EBI-950027">
        <id>Q6W2J9</id>
        <label>BCOR</label>
    </interactant>
    <organismsDiffer>false</organismsDiffer>
    <experiments>5</experiments>
</comment>
<comment type="interaction">
    <interactant intactId="EBI-3955564">
        <id>Q8NHM5</id>
    </interactant>
    <interactant intactId="EBI-307486">
        <id>P63208</id>
        <label>SKP1</label>
    </interactant>
    <organismsDiffer>false</organismsDiffer>
    <experiments>8</experiments>
</comment>
<comment type="subcellular location">
    <subcellularLocation>
        <location evidence="9">Nucleus</location>
        <location evidence="9">Nucleolus</location>
    </subcellularLocation>
    <subcellularLocation>
        <location evidence="10">Nucleus</location>
    </subcellularLocation>
    <subcellularLocation>
        <location evidence="10">Chromosome</location>
    </subcellularLocation>
</comment>
<comment type="alternative products">
    <event type="alternative splicing"/>
    <isoform>
        <id>Q8NHM5-1</id>
        <name>1</name>
        <sequence type="displayed"/>
    </isoform>
    <isoform>
        <id>Q8NHM5-2</id>
        <name>2</name>
        <sequence type="described" ref="VSP_011340 VSP_011341"/>
    </isoform>
    <isoform>
        <id>Q8NHM5-3</id>
        <name>3</name>
        <sequence type="described" ref="VSP_017475 VSP_017476"/>
    </isoform>
    <isoform>
        <id>Q8NHM5-4</id>
        <name>4</name>
        <sequence type="described" ref="VSP_043146 VSP_043147 VSP_043148"/>
    </isoform>
    <isoform>
        <id>Q8NHM5-5</id>
        <name>5</name>
        <sequence type="described" ref="VSP_057394 VSP_057395 VSP_057396"/>
    </isoform>
</comment>
<comment type="domain">
    <text evidence="11">The LRR repeats are required for the interaction with the PCGF1-BCORL1 heterodimeric complex.</text>
</comment>
<comment type="domain">
    <text evidence="9">The JmjC domain mediates demethylation activity (PubMed:17994099). It is also required for repression of ribosomal RNA genes (PubMed:17994099).</text>
</comment>
<comment type="domain">
    <text evidence="12">The CXXC zinc finger mediates binding to DNA containing unmethylated cytidine-phosphate-guanosine (CpG) dinucleotides.</text>
</comment>
<comment type="domain">
    <text evidence="13">The F-box domain mediates interaction with UBB.</text>
</comment>
<comment type="similarity">
    <text evidence="19">Belongs to the JHDM1 histone demethylase family.</text>
</comment>
<comment type="sequence caution" evidence="19">
    <conflict type="erroneous initiation">
        <sequence resource="EMBL-CDS" id="AAH08735"/>
    </conflict>
</comment>
<comment type="sequence caution" evidence="19">
    <conflict type="erroneous initiation">
        <sequence resource="EMBL-CDS" id="BAB55112"/>
    </conflict>
</comment>
<comment type="sequence caution" evidence="19">
    <conflict type="erroneous initiation">
        <sequence resource="EMBL-CDS" id="BAB55301"/>
    </conflict>
</comment>
<comment type="sequence caution" evidence="19">
    <conflict type="erroneous initiation">
        <sequence resource="EMBL-CDS" id="BAC11159"/>
    </conflict>
</comment>
<sequence length="1336" mass="152615">MAGPQMGGSAEDHPPRKRHAAEKQKKKTVIYTKCFEFESATQRPIDRQRYDENEDLSDVEEIVSVRGFSLEEKLRSQLYQGDFVHAMEGKDFNYEYVQREALRVPLIFREKDGLGIKMPDPDFTVRDVKLLVGSRRLVDVMDVNTQKGTEMSMSQFVRYYETPEAQRDKLYNVISLEFSHTKLEHLVKRPTVVDLVDWVDNMWPQHLKEKQTEATNAIAEMKYPKVKKYCLMSVKGCFTDFHIDFGGTSVWYHVFRGGKIFWLIPPTLHNLALYEEWVLSGKQSDIFLGDRVERCQRIELKQGYTFFIPSGWIHAVYTPVDSLVFGGNILHSFNVPMQLRIYEIEDRTRVQPKFRYPFYYEMCWYVLERYVYCVTQRSHLTQEYQRESMLIDAPRKPSIDGFSSDSWLEMEEEACDQQPQEEEEKDEEGEGRDRAPKPPTDGSTSPTSTPSEDQEALGKKPKAPALRFLKRTLSNESEESVKSTTLAVDYPKTPTGSPATEVSAKWTHLTEFELKGLKALVEKLESLPENKKCVPEGIEDPQALLEGVKNVLKEHADDDPSLAITGVPVVTWPKKTPKNRAVGRPKGKLGPASAVKLAANRTTAGARRRRTRCRKCEACLRTECGECHFCKDMKKFGGPGRMKQSCIMRQCIAPVLPHTAVCLVCGEAGKEDTVEEEEGKFNLMLMECSICNEIIHPGCLKIKESEGVVNDELPNCWECPKCNHAGKTGKQKRGPGFKYASNLPGSLLKEQKMNRDNKEGQEPAKRRSECEEAPRRRSDEHSKKVPPDGLLRRKSDDVHLRKKRKYEKPQELSGRKRASSLQTSPGSSSHLSPRPPLGSSLSPWWRSSLTYFQQQLKPGKEDKLFRKKRRSWKNAEDRMALANKPLRRFKQEPEDELPEAPPKTRESDHSRSSSPTAGPSTEGAEGPEEKKKVKMRRKRRLPNKELSRELSKELNHEIQRTENSLANENQQPIKSEPESEGEEPKRPPGICERPHRFSKGLNGTPRELRHQLGPSLRSPPRVISRPPPSVSPPKCIQMERHVIRPPPISPPPDSLPLDDGAAHVMHREVWMAVFSYLSHQDLCVCMRVCRTWNRWCCDKRLWTRIDLNHCKSITPLMLSGIIRRQPVSLDLSWTNISKKQLSWLINRLPGLRDLVLSGCSWIAVSALCSSSCPLLRTLDVQWVEGLKDAQMRDLLSPPTDNRPGQMDNRSKLRNIVELRLAGLDITDASLRLIIRHMPLLSKLHLSYCNHVTDQSINLLTAVGTTTRDSLTEINLSDCNKVTDQCLSFFKRCGNICHIDLRYCKQVTKEGCEQFIAEMSVSVQFGQVEEKLLQKLS</sequence>
<organism>
    <name type="scientific">Homo sapiens</name>
    <name type="common">Human</name>
    <dbReference type="NCBI Taxonomy" id="9606"/>
    <lineage>
        <taxon>Eukaryota</taxon>
        <taxon>Metazoa</taxon>
        <taxon>Chordata</taxon>
        <taxon>Craniata</taxon>
        <taxon>Vertebrata</taxon>
        <taxon>Euteleostomi</taxon>
        <taxon>Mammalia</taxon>
        <taxon>Eutheria</taxon>
        <taxon>Euarchontoglires</taxon>
        <taxon>Primates</taxon>
        <taxon>Haplorrhini</taxon>
        <taxon>Catarrhini</taxon>
        <taxon>Hominidae</taxon>
        <taxon>Homo</taxon>
    </lineage>
</organism>
<keyword id="KW-0002">3D-structure</keyword>
<keyword id="KW-0025">Alternative splicing</keyword>
<keyword id="KW-0156">Chromatin regulator</keyword>
<keyword id="KW-0158">Chromosome</keyword>
<keyword id="KW-0175">Coiled coil</keyword>
<keyword id="KW-0223">Dioxygenase</keyword>
<keyword id="KW-0238">DNA-binding</keyword>
<keyword id="KW-0408">Iron</keyword>
<keyword id="KW-1017">Isopeptide bond</keyword>
<keyword id="KW-0433">Leucine-rich repeat</keyword>
<keyword id="KW-0479">Metal-binding</keyword>
<keyword id="KW-0539">Nucleus</keyword>
<keyword id="KW-0560">Oxidoreductase</keyword>
<keyword id="KW-0597">Phosphoprotein</keyword>
<keyword id="KW-1267">Proteomics identification</keyword>
<keyword id="KW-1185">Reference proteome</keyword>
<keyword id="KW-0677">Repeat</keyword>
<keyword id="KW-0678">Repressor</keyword>
<keyword id="KW-0694">RNA-binding</keyword>
<keyword id="KW-0699">rRNA-binding</keyword>
<keyword id="KW-0804">Transcription</keyword>
<keyword id="KW-0805">Transcription regulation</keyword>
<keyword id="KW-0832">Ubl conjugation</keyword>
<keyword id="KW-0833">Ubl conjugation pathway</keyword>
<keyword id="KW-0862">Zinc</keyword>
<keyword id="KW-0863">Zinc-finger</keyword>
<feature type="chain" id="PRO_0000119853" description="Lysine-specific demethylase 2B">
    <location>
        <begin position="1"/>
        <end position="1336"/>
    </location>
</feature>
<feature type="domain" description="JmjC" evidence="6">
    <location>
        <begin position="178"/>
        <end position="346"/>
    </location>
</feature>
<feature type="domain" description="F-box">
    <location>
        <begin position="1059"/>
        <end position="1105"/>
    </location>
</feature>
<feature type="repeat" description="LRR 1">
    <location>
        <begin position="1093"/>
        <end position="1120"/>
    </location>
</feature>
<feature type="repeat" description="LRR 2">
    <location>
        <begin position="1133"/>
        <end position="1154"/>
    </location>
</feature>
<feature type="repeat" description="LRR 3">
    <location>
        <begin position="1156"/>
        <end position="1182"/>
    </location>
</feature>
<feature type="repeat" description="LRR 4">
    <location>
        <begin position="1222"/>
        <end position="1247"/>
    </location>
</feature>
<feature type="repeat" description="LRR 5">
    <location>
        <begin position="1248"/>
        <end position="1277"/>
    </location>
</feature>
<feature type="repeat" description="LRR 6">
    <location>
        <begin position="1278"/>
        <end position="1302"/>
    </location>
</feature>
<feature type="repeat" description="LRR 7">
    <location>
        <begin position="1303"/>
        <end position="1336"/>
    </location>
</feature>
<feature type="zinc finger region" description="CXXC-type" evidence="5 12">
    <location>
        <begin position="606"/>
        <end position="652"/>
    </location>
</feature>
<feature type="zinc finger region" description="PHD-type" evidence="4 12">
    <location>
        <begin position="659"/>
        <end position="725"/>
    </location>
</feature>
<feature type="region of interest" description="Disordered" evidence="7">
    <location>
        <begin position="1"/>
        <end position="25"/>
    </location>
</feature>
<feature type="region of interest" description="Disordered" evidence="7">
    <location>
        <begin position="410"/>
        <end position="465"/>
    </location>
</feature>
<feature type="region of interest" description="Disordered" evidence="7">
    <location>
        <begin position="727"/>
        <end position="843"/>
    </location>
</feature>
<feature type="region of interest" description="Disordered" evidence="7">
    <location>
        <begin position="855"/>
        <end position="1034"/>
    </location>
</feature>
<feature type="coiled-coil region" evidence="3">
    <location>
        <begin position="943"/>
        <end position="971"/>
    </location>
</feature>
<feature type="compositionally biased region" description="Basic residues" evidence="7">
    <location>
        <begin position="15"/>
        <end position="25"/>
    </location>
</feature>
<feature type="compositionally biased region" description="Acidic residues" evidence="7">
    <location>
        <begin position="410"/>
        <end position="430"/>
    </location>
</feature>
<feature type="compositionally biased region" description="Low complexity" evidence="7">
    <location>
        <begin position="440"/>
        <end position="451"/>
    </location>
</feature>
<feature type="compositionally biased region" description="Basic and acidic residues" evidence="7">
    <location>
        <begin position="749"/>
        <end position="799"/>
    </location>
</feature>
<feature type="compositionally biased region" description="Low complexity" evidence="7">
    <location>
        <begin position="819"/>
        <end position="843"/>
    </location>
</feature>
<feature type="compositionally biased region" description="Basic and acidic residues" evidence="7">
    <location>
        <begin position="902"/>
        <end position="911"/>
    </location>
</feature>
<feature type="compositionally biased region" description="Basic residues" evidence="7">
    <location>
        <begin position="932"/>
        <end position="941"/>
    </location>
</feature>
<feature type="compositionally biased region" description="Basic and acidic residues" evidence="7">
    <location>
        <begin position="942"/>
        <end position="960"/>
    </location>
</feature>
<feature type="compositionally biased region" description="Polar residues" evidence="7">
    <location>
        <begin position="961"/>
        <end position="971"/>
    </location>
</feature>
<feature type="compositionally biased region" description="Low complexity" evidence="7">
    <location>
        <begin position="1014"/>
        <end position="1024"/>
    </location>
</feature>
<feature type="binding site" evidence="1">
    <location>
        <position position="239"/>
    </location>
    <ligand>
        <name>substrate</name>
    </ligand>
</feature>
<feature type="binding site" evidence="6">
    <location>
        <position position="242"/>
    </location>
    <ligand>
        <name>Fe cation</name>
        <dbReference type="ChEBI" id="CHEBI:24875"/>
        <note>catalytic</note>
    </ligand>
</feature>
<feature type="binding site" evidence="6">
    <location>
        <position position="244"/>
    </location>
    <ligand>
        <name>Fe cation</name>
        <dbReference type="ChEBI" id="CHEBI:24875"/>
        <note>catalytic</note>
    </ligand>
</feature>
<feature type="binding site" evidence="1">
    <location>
        <position position="259"/>
    </location>
    <ligand>
        <name>substrate</name>
    </ligand>
</feature>
<feature type="binding site" evidence="6">
    <location>
        <position position="314"/>
    </location>
    <ligand>
        <name>Fe cation</name>
        <dbReference type="ChEBI" id="CHEBI:24875"/>
        <note>catalytic</note>
    </ligand>
</feature>
<feature type="binding site" evidence="5 12 20">
    <location>
        <position position="613"/>
    </location>
    <ligand>
        <name>Zn(2+)</name>
        <dbReference type="ChEBI" id="CHEBI:29105"/>
        <label>1</label>
    </ligand>
</feature>
<feature type="binding site" evidence="5 12 20">
    <location>
        <position position="616"/>
    </location>
    <ligand>
        <name>Zn(2+)</name>
        <dbReference type="ChEBI" id="CHEBI:29105"/>
        <label>1</label>
    </ligand>
</feature>
<feature type="binding site" evidence="5 12 20">
    <location>
        <position position="619"/>
    </location>
    <ligand>
        <name>Zn(2+)</name>
        <dbReference type="ChEBI" id="CHEBI:29105"/>
        <label>1</label>
    </ligand>
</feature>
<feature type="binding site" evidence="5 12 20">
    <location>
        <position position="624"/>
    </location>
    <ligand>
        <name>Zn(2+)</name>
        <dbReference type="ChEBI" id="CHEBI:29105"/>
        <label>2</label>
    </ligand>
</feature>
<feature type="binding site" evidence="5 12 20">
    <location>
        <position position="627"/>
    </location>
    <ligand>
        <name>Zn(2+)</name>
        <dbReference type="ChEBI" id="CHEBI:29105"/>
        <label>2</label>
    </ligand>
</feature>
<feature type="binding site" evidence="5 12 20">
    <location>
        <position position="630"/>
    </location>
    <ligand>
        <name>Zn(2+)</name>
        <dbReference type="ChEBI" id="CHEBI:29105"/>
        <label>2</label>
    </ligand>
</feature>
<feature type="binding site" evidence="5 12 20">
    <location>
        <position position="646"/>
    </location>
    <ligand>
        <name>Zn(2+)</name>
        <dbReference type="ChEBI" id="CHEBI:29105"/>
        <label>2</label>
    </ligand>
</feature>
<feature type="binding site" evidence="5">
    <location>
        <position position="651"/>
    </location>
    <ligand>
        <name>Zn(2+)</name>
        <dbReference type="ChEBI" id="CHEBI:29105"/>
        <label>1</label>
    </ligand>
</feature>
<feature type="binding site" evidence="12 20">
    <location>
        <position position="662"/>
    </location>
    <ligand>
        <name>Zn(2+)</name>
        <dbReference type="ChEBI" id="CHEBI:29105"/>
    </ligand>
</feature>
<feature type="binding site" evidence="12 20">
    <location>
        <position position="665"/>
    </location>
    <ligand>
        <name>Zn(2+)</name>
        <dbReference type="ChEBI" id="CHEBI:29105"/>
    </ligand>
</feature>
<feature type="binding site" evidence="12 20">
    <location>
        <position position="688"/>
    </location>
    <ligand>
        <name>Zn(2+)</name>
        <dbReference type="ChEBI" id="CHEBI:29105"/>
    </ligand>
</feature>
<feature type="binding site" evidence="12 20">
    <location>
        <position position="691"/>
    </location>
    <ligand>
        <name>Zn(2+)</name>
        <dbReference type="ChEBI" id="CHEBI:29105"/>
    </ligand>
</feature>
<feature type="binding site" evidence="12 20">
    <location>
        <position position="696"/>
    </location>
    <ligand>
        <name>Zn(2+)</name>
        <dbReference type="ChEBI" id="CHEBI:29105"/>
    </ligand>
</feature>
<feature type="binding site" evidence="12 20">
    <location>
        <position position="699"/>
    </location>
    <ligand>
        <name>Zn(2+)</name>
        <dbReference type="ChEBI" id="CHEBI:29105"/>
    </ligand>
</feature>
<feature type="binding site" evidence="12 20">
    <location>
        <position position="719"/>
    </location>
    <ligand>
        <name>Zn(2+)</name>
        <dbReference type="ChEBI" id="CHEBI:29105"/>
    </ligand>
</feature>
<feature type="binding site" evidence="12 20">
    <location>
        <position position="722"/>
    </location>
    <ligand>
        <name>Zn(2+)</name>
        <dbReference type="ChEBI" id="CHEBI:29105"/>
    </ligand>
</feature>
<feature type="modified residue" description="Phosphoserine" evidence="25">
    <location>
        <position position="57"/>
    </location>
</feature>
<feature type="modified residue" description="Phosphoserine" evidence="24 25">
    <location>
        <position position="474"/>
    </location>
</feature>
<feature type="modified residue" description="Phosphoserine" evidence="24">
    <location>
        <position position="477"/>
    </location>
</feature>
<feature type="modified residue" description="Phosphothreonine" evidence="23 24">
    <location>
        <position position="493"/>
    </location>
</feature>
<feature type="modified residue" description="Phosphoserine" evidence="24">
    <location>
        <position position="497"/>
    </location>
</feature>
<feature type="modified residue" description="Phosphoserine" evidence="25">
    <location>
        <position position="951"/>
    </location>
</feature>
<feature type="modified residue" description="Phosphoserine" evidence="23 25">
    <location>
        <position position="975"/>
    </location>
</feature>
<feature type="modified residue" description="Phosphoserine" evidence="23 25">
    <location>
        <position position="979"/>
    </location>
</feature>
<feature type="modified residue" description="Phosphoserine" evidence="25">
    <location>
        <position position="1018"/>
    </location>
</feature>
<feature type="modified residue" description="Phosphoserine" evidence="25">
    <location>
        <position position="1031"/>
    </location>
</feature>
<feature type="cross-link" description="Glycyl lysine isopeptide (Lys-Gly) (interchain with G-Cter in SUMO2)" evidence="29">
    <location>
        <position position="857"/>
    </location>
</feature>
<feature type="cross-link" description="Glycyl lysine isopeptide (Lys-Gly) (interchain with G-Cter in SUMO2)" evidence="26 27 28 29">
    <location>
        <position position="890"/>
    </location>
</feature>
<feature type="splice variant" id="VSP_057394" description="In isoform 5." evidence="15">
    <location>
        <begin position="1"/>
        <end position="117"/>
    </location>
</feature>
<feature type="splice variant" id="VSP_043146" description="In isoform 4." evidence="14">
    <original>MAGPQMGGSAEDHPPRKRHAAEKQKKKTVIYTKCFEFESATQ</original>
    <variation>MEAEKDSGRRL</variation>
    <location>
        <begin position="1"/>
        <end position="42"/>
    </location>
</feature>
<feature type="splice variant" id="VSP_057395" description="In isoform 5." evidence="15">
    <original>PVLPHTAVCLVCGEAGKEDTVEE</original>
    <variation>TAIRSLISACPSSNAVETSVILT</variation>
    <location>
        <begin position="654"/>
        <end position="676"/>
    </location>
</feature>
<feature type="splice variant" id="VSP_057396" description="In isoform 5." evidence="15">
    <location>
        <begin position="677"/>
        <end position="1336"/>
    </location>
</feature>
<feature type="splice variant" id="VSP_011340" description="In isoform 2." evidence="18">
    <original>K</original>
    <variation>KAYK</variation>
    <location>
        <position position="730"/>
    </location>
</feature>
<feature type="splice variant" id="VSP_043147" description="In isoform 4." evidence="14">
    <location>
        <begin position="818"/>
        <end position="855"/>
    </location>
</feature>
<feature type="splice variant" id="VSP_017475" description="In isoform 3." evidence="16">
    <original>LKPGKEDKLFRKK</original>
    <variation>Q</variation>
    <location>
        <begin position="856"/>
        <end position="868"/>
    </location>
</feature>
<feature type="splice variant" id="VSP_017476" description="In isoform 3." evidence="16">
    <original>G</original>
    <variation>GPG</variation>
    <location>
        <position position="1204"/>
    </location>
</feature>
<feature type="splice variant" id="VSP_011341" description="In isoform 2." evidence="18">
    <original>DCNKVTDQCLSFFKRCGNICHIDLRYCKQVTKEGCEQFIAEMSVSVQFGQVEEKLLQKLS</original>
    <variation>ASLLGRVFGLQFWGICEPQARKNAGWA</variation>
    <location>
        <begin position="1277"/>
        <end position="1336"/>
    </location>
</feature>
<feature type="splice variant" id="VSP_043148" description="In isoform 4." evidence="14">
    <original>VSVQFGQVEEKLLQKLS</original>
    <variation>SFQGRSCSTTRLGDE</variation>
    <location>
        <begin position="1320"/>
        <end position="1336"/>
    </location>
</feature>
<feature type="mutagenesis site" description="Increased interaction with UBB." evidence="13">
    <original>V</original>
    <variation>W</variation>
    <location>
        <position position="1064"/>
    </location>
</feature>
<feature type="mutagenesis site" description="Decreased ininteraction with UBB." evidence="13">
    <original>V</original>
    <variation>A</variation>
    <location>
        <position position="1069"/>
    </location>
</feature>
<feature type="mutagenesis site" description="Increased interaction with UBB." evidence="13">
    <original>A</original>
    <variation>Y</variation>
    <location>
        <position position="1072"/>
    </location>
</feature>
<feature type="sequence conflict" description="In Ref. 6; BAC11159." evidence="19" ref="6">
    <original>L</original>
    <variation>F</variation>
    <location>
        <position position="864"/>
    </location>
</feature>
<feature type="sequence conflict" description="In Ref. 6; BAC11159." evidence="19" ref="6">
    <original>T</original>
    <variation>R</variation>
    <location>
        <position position="1226"/>
    </location>
</feature>
<feature type="sequence conflict" description="In Ref. 6; BAC11159." evidence="19" ref="6">
    <original>I</original>
    <variation>T</variation>
    <location>
        <position position="1295"/>
    </location>
</feature>
<feature type="sequence conflict" description="In Ref. 6; BAC11159." evidence="19" ref="6">
    <original>K</original>
    <variation>R</variation>
    <location>
        <position position="1334"/>
    </location>
</feature>
<feature type="helix" evidence="30">
    <location>
        <begin position="617"/>
        <end position="620"/>
    </location>
</feature>
<feature type="helix" evidence="30">
    <location>
        <begin position="628"/>
        <end position="632"/>
    </location>
</feature>
<feature type="helix" evidence="30">
    <location>
        <begin position="634"/>
        <end position="636"/>
    </location>
</feature>
<feature type="helix" evidence="30">
    <location>
        <begin position="647"/>
        <end position="649"/>
    </location>
</feature>
<feature type="turn" evidence="30">
    <location>
        <begin position="663"/>
        <end position="665"/>
    </location>
</feature>
<feature type="helix" evidence="30">
    <location>
        <begin position="671"/>
        <end position="673"/>
    </location>
</feature>
<feature type="helix" evidence="30">
    <location>
        <begin position="677"/>
        <end position="682"/>
    </location>
</feature>
<feature type="strand" evidence="30">
    <location>
        <begin position="686"/>
        <end position="688"/>
    </location>
</feature>
<feature type="turn" evidence="30">
    <location>
        <begin position="689"/>
        <end position="691"/>
    </location>
</feature>
<feature type="helix" evidence="30">
    <location>
        <begin position="697"/>
        <end position="699"/>
    </location>
</feature>
<feature type="strand" evidence="30">
    <location>
        <begin position="711"/>
        <end position="713"/>
    </location>
</feature>
<feature type="strand" evidence="30">
    <location>
        <begin position="716"/>
        <end position="718"/>
    </location>
</feature>
<feature type="turn" evidence="30">
    <location>
        <begin position="720"/>
        <end position="722"/>
    </location>
</feature>
<feature type="helix" evidence="31">
    <location>
        <begin position="1067"/>
        <end position="1074"/>
    </location>
</feature>
<feature type="helix" evidence="31">
    <location>
        <begin position="1079"/>
        <end position="1086"/>
    </location>
</feature>
<feature type="helix" evidence="31">
    <location>
        <begin position="1092"/>
        <end position="1095"/>
    </location>
</feature>
<feature type="helix" evidence="31">
    <location>
        <begin position="1099"/>
        <end position="1102"/>
    </location>
</feature>
<feature type="strand" evidence="32">
    <location>
        <begin position="1104"/>
        <end position="1106"/>
    </location>
</feature>
<feature type="helix" evidence="32">
    <location>
        <begin position="1115"/>
        <end position="1124"/>
    </location>
</feature>
<feature type="strand" evidence="32">
    <location>
        <begin position="1127"/>
        <end position="1130"/>
    </location>
</feature>
<feature type="helix" evidence="32">
    <location>
        <begin position="1138"/>
        <end position="1145"/>
    </location>
</feature>
<feature type="strand" evidence="32">
    <location>
        <begin position="1153"/>
        <end position="1155"/>
    </location>
</feature>
<feature type="helix" evidence="32">
    <location>
        <begin position="1161"/>
        <end position="1164"/>
    </location>
</feature>
<feature type="helix" evidence="32">
    <location>
        <begin position="1165"/>
        <end position="1167"/>
    </location>
</feature>
<feature type="strand" evidence="31">
    <location>
        <begin position="1169"/>
        <end position="1171"/>
    </location>
</feature>
<feature type="strand" evidence="32">
    <location>
        <begin position="1176"/>
        <end position="1179"/>
    </location>
</feature>
<feature type="helix" evidence="32">
    <location>
        <begin position="1188"/>
        <end position="1195"/>
    </location>
</feature>
<feature type="turn" evidence="32">
    <location>
        <begin position="1211"/>
        <end position="1214"/>
    </location>
</feature>
<feature type="strand" evidence="32">
    <location>
        <begin position="1216"/>
        <end position="1219"/>
    </location>
</feature>
<feature type="helix" evidence="32">
    <location>
        <begin position="1227"/>
        <end position="1236"/>
    </location>
</feature>
<feature type="strand" evidence="32">
    <location>
        <begin position="1242"/>
        <end position="1244"/>
    </location>
</feature>
<feature type="helix" evidence="32">
    <location>
        <begin position="1253"/>
        <end position="1259"/>
    </location>
</feature>
<feature type="helix" evidence="32">
    <location>
        <begin position="1266"/>
        <end position="1269"/>
    </location>
</feature>
<feature type="strand" evidence="32">
    <location>
        <begin position="1272"/>
        <end position="1274"/>
    </location>
</feature>
<feature type="helix" evidence="32">
    <location>
        <begin position="1285"/>
        <end position="1289"/>
    </location>
</feature>
<feature type="strand" evidence="32">
    <location>
        <begin position="1297"/>
        <end position="1299"/>
    </location>
</feature>
<feature type="helix" evidence="32">
    <location>
        <begin position="1308"/>
        <end position="1318"/>
    </location>
</feature>
<feature type="turn" evidence="32">
    <location>
        <begin position="1319"/>
        <end position="1321"/>
    </location>
</feature>
<feature type="strand" evidence="32">
    <location>
        <begin position="1324"/>
        <end position="1328"/>
    </location>
</feature>
<feature type="strand" evidence="32">
    <location>
        <begin position="1331"/>
        <end position="1334"/>
    </location>
</feature>
<dbReference type="EC" id="1.14.11.27" evidence="8 10"/>
<dbReference type="EMBL" id="AJ459424">
    <property type="protein sequence ID" value="CAD30700.1"/>
    <property type="molecule type" value="mRNA"/>
</dbReference>
<dbReference type="EMBL" id="AK027440">
    <property type="protein sequence ID" value="BAB55112.1"/>
    <property type="status" value="ALT_INIT"/>
    <property type="molecule type" value="mRNA"/>
</dbReference>
<dbReference type="EMBL" id="AK027692">
    <property type="protein sequence ID" value="BAB55301.1"/>
    <property type="status" value="ALT_INIT"/>
    <property type="molecule type" value="mRNA"/>
</dbReference>
<dbReference type="EMBL" id="AK074718">
    <property type="protein sequence ID" value="BAC11159.1"/>
    <property type="status" value="ALT_INIT"/>
    <property type="molecule type" value="mRNA"/>
</dbReference>
<dbReference type="EMBL" id="AK127328">
    <property type="protein sequence ID" value="BAG54483.1"/>
    <property type="molecule type" value="mRNA"/>
</dbReference>
<dbReference type="EMBL" id="AC048337">
    <property type="status" value="NOT_ANNOTATED_CDS"/>
    <property type="molecule type" value="Genomic_DNA"/>
</dbReference>
<dbReference type="EMBL" id="AC073650">
    <property type="status" value="NOT_ANNOTATED_CDS"/>
    <property type="molecule type" value="Genomic_DNA"/>
</dbReference>
<dbReference type="EMBL" id="AC145422">
    <property type="status" value="NOT_ANNOTATED_CDS"/>
    <property type="molecule type" value="Genomic_DNA"/>
</dbReference>
<dbReference type="EMBL" id="KC877509">
    <property type="status" value="NOT_ANNOTATED_CDS"/>
    <property type="molecule type" value="Genomic_DNA"/>
</dbReference>
<dbReference type="EMBL" id="BC008735">
    <property type="protein sequence ID" value="AAH08735.2"/>
    <property type="status" value="ALT_INIT"/>
    <property type="molecule type" value="mRNA"/>
</dbReference>
<dbReference type="EMBL" id="BC115379">
    <property type="protein sequence ID" value="AAI15380.1"/>
    <property type="molecule type" value="mRNA"/>
</dbReference>
<dbReference type="EMBL" id="AL133572">
    <property type="protein sequence ID" value="CAB63721.2"/>
    <property type="molecule type" value="mRNA"/>
</dbReference>
<dbReference type="EMBL" id="AB031230">
    <property type="protein sequence ID" value="BAA97672.1"/>
    <property type="molecule type" value="mRNA"/>
</dbReference>
<dbReference type="CCDS" id="CCDS41849.1">
    <molecule id="Q8NHM5-4"/>
</dbReference>
<dbReference type="CCDS" id="CCDS41850.1">
    <molecule id="Q8NHM5-1"/>
</dbReference>
<dbReference type="PIR" id="T43477">
    <property type="entry name" value="T43477"/>
</dbReference>
<dbReference type="RefSeq" id="NP_001005366.1">
    <molecule id="Q8NHM5-4"/>
    <property type="nucleotide sequence ID" value="NM_001005366.2"/>
</dbReference>
<dbReference type="RefSeq" id="NP_115979.3">
    <molecule id="Q8NHM5-1"/>
    <property type="nucleotide sequence ID" value="NM_032590.4"/>
</dbReference>
<dbReference type="RefSeq" id="XP_047285649.1">
    <molecule id="Q8NHM5-1"/>
    <property type="nucleotide sequence ID" value="XM_047429693.1"/>
</dbReference>
<dbReference type="PDB" id="4O64">
    <property type="method" value="X-ray"/>
    <property type="resolution" value="2.13 A"/>
    <property type="chains" value="A/B/C=607-723"/>
</dbReference>
<dbReference type="PDB" id="5JH5">
    <property type="method" value="X-ray"/>
    <property type="resolution" value="2.55 A"/>
    <property type="chains" value="A=1059-1336"/>
</dbReference>
<dbReference type="PDB" id="6BVA">
    <property type="method" value="X-ray"/>
    <property type="resolution" value="2.66 A"/>
    <property type="chains" value="E/F=1060-1104"/>
</dbReference>
<dbReference type="PDB" id="8HCU">
    <property type="method" value="X-ray"/>
    <property type="resolution" value="2.20 A"/>
    <property type="chains" value="A=1103-1336"/>
</dbReference>
<dbReference type="PDBsum" id="4O64"/>
<dbReference type="PDBsum" id="5JH5"/>
<dbReference type="PDBsum" id="6BVA"/>
<dbReference type="PDBsum" id="8HCU"/>
<dbReference type="SASBDB" id="Q8NHM5"/>
<dbReference type="SMR" id="Q8NHM5"/>
<dbReference type="BioGRID" id="124197">
    <property type="interactions" value="159"/>
</dbReference>
<dbReference type="ComplexPortal" id="CPX-2272">
    <property type="entry name" value="Non-canonical polycomb repressive complex 1.1, RING2-PCGF1-YAF2 variant"/>
</dbReference>
<dbReference type="ComplexPortal" id="CPX-2354">
    <property type="entry name" value="Non-canonical polycomb repressive complex 1.1, RING1-PCGF1-RYBP variant"/>
</dbReference>
<dbReference type="ComplexPortal" id="CPX-2627">
    <property type="entry name" value="Non-canonical polycomb repressive complex 1.1, RING2-PCGF1-RYBP variant"/>
</dbReference>
<dbReference type="ComplexPortal" id="CPX-2832">
    <property type="entry name" value="SCF E3 ubiquitin ligase complex, KDM2B variant"/>
</dbReference>
<dbReference type="ComplexPortal" id="CPX-7561">
    <property type="entry name" value="Non-canonical polycomb repressive complex 1.1, RING1-PCGF1-YAF2 variant"/>
</dbReference>
<dbReference type="CORUM" id="Q8NHM5"/>
<dbReference type="FunCoup" id="Q8NHM5">
    <property type="interactions" value="3755"/>
</dbReference>
<dbReference type="IntAct" id="Q8NHM5">
    <property type="interactions" value="96"/>
</dbReference>
<dbReference type="MINT" id="Q8NHM5"/>
<dbReference type="STRING" id="9606.ENSP00000366271"/>
<dbReference type="BindingDB" id="Q8NHM5"/>
<dbReference type="ChEMBL" id="CHEMBL3779760"/>
<dbReference type="GlyGen" id="Q8NHM5">
    <property type="glycosylation" value="4 sites, 1 N-linked glycan (1 site), 1 O-linked glycan (1 site)"/>
</dbReference>
<dbReference type="iPTMnet" id="Q8NHM5"/>
<dbReference type="PhosphoSitePlus" id="Q8NHM5"/>
<dbReference type="SwissPalm" id="Q8NHM5"/>
<dbReference type="BioMuta" id="KDM2B"/>
<dbReference type="DMDM" id="51316032"/>
<dbReference type="jPOST" id="Q8NHM5"/>
<dbReference type="MassIVE" id="Q8NHM5"/>
<dbReference type="PaxDb" id="9606-ENSP00000366271"/>
<dbReference type="PeptideAtlas" id="Q8NHM5"/>
<dbReference type="ProteomicsDB" id="61239"/>
<dbReference type="ProteomicsDB" id="73723">
    <molecule id="Q8NHM5-1"/>
</dbReference>
<dbReference type="ProteomicsDB" id="73724">
    <molecule id="Q8NHM5-2"/>
</dbReference>
<dbReference type="ProteomicsDB" id="73725">
    <molecule id="Q8NHM5-3"/>
</dbReference>
<dbReference type="ProteomicsDB" id="73726">
    <molecule id="Q8NHM5-4"/>
</dbReference>
<dbReference type="Pumba" id="Q8NHM5"/>
<dbReference type="Antibodypedia" id="31579">
    <property type="antibodies" value="314 antibodies from 29 providers"/>
</dbReference>
<dbReference type="DNASU" id="84678"/>
<dbReference type="Ensembl" id="ENST00000377069.8">
    <molecule id="Q8NHM5-4"/>
    <property type="protein sequence ID" value="ENSP00000366269.3"/>
    <property type="gene ID" value="ENSG00000089094.21"/>
</dbReference>
<dbReference type="Ensembl" id="ENST00000377071.9">
    <molecule id="Q8NHM5-1"/>
    <property type="protein sequence ID" value="ENSP00000366271.3"/>
    <property type="gene ID" value="ENSG00000089094.21"/>
</dbReference>
<dbReference type="Ensembl" id="ENST00000611216.4">
    <molecule id="Q8NHM5-5"/>
    <property type="protein sequence ID" value="ENSP00000480847.1"/>
    <property type="gene ID" value="ENSG00000089094.21"/>
</dbReference>
<dbReference type="GeneID" id="84678"/>
<dbReference type="KEGG" id="hsa:84678"/>
<dbReference type="MANE-Select" id="ENST00000377071.9">
    <property type="protein sequence ID" value="ENSP00000366271.3"/>
    <property type="RefSeq nucleotide sequence ID" value="NM_032590.5"/>
    <property type="RefSeq protein sequence ID" value="NP_115979.3"/>
</dbReference>
<dbReference type="UCSC" id="uc058uhm.1">
    <molecule id="Q8NHM5-1"/>
    <property type="organism name" value="human"/>
</dbReference>
<dbReference type="UCSC" id="uc058uhn.1">
    <property type="organism name" value="human"/>
</dbReference>
<dbReference type="AGR" id="HGNC:13610"/>
<dbReference type="CTD" id="84678"/>
<dbReference type="DisGeNET" id="84678"/>
<dbReference type="GeneCards" id="KDM2B"/>
<dbReference type="HGNC" id="HGNC:13610">
    <property type="gene designation" value="KDM2B"/>
</dbReference>
<dbReference type="HPA" id="ENSG00000089094">
    <property type="expression patterns" value="Low tissue specificity"/>
</dbReference>
<dbReference type="MalaCards" id="KDM2B"/>
<dbReference type="MIM" id="609078">
    <property type="type" value="gene"/>
</dbReference>
<dbReference type="neXtProt" id="NX_Q8NHM5"/>
<dbReference type="OpenTargets" id="ENSG00000089094"/>
<dbReference type="PharmGKB" id="PA164721242"/>
<dbReference type="VEuPathDB" id="HostDB:ENSG00000089094"/>
<dbReference type="eggNOG" id="KOG1633">
    <property type="taxonomic scope" value="Eukaryota"/>
</dbReference>
<dbReference type="eggNOG" id="KOG1947">
    <property type="taxonomic scope" value="Eukaryota"/>
</dbReference>
<dbReference type="GeneTree" id="ENSGT00940000154717"/>
<dbReference type="HOGENOM" id="CLU_003540_0_1_1"/>
<dbReference type="InParanoid" id="Q8NHM5"/>
<dbReference type="OMA" id="HTHLTHY"/>
<dbReference type="OrthoDB" id="5876800at2759"/>
<dbReference type="PAN-GO" id="Q8NHM5">
    <property type="GO annotations" value="4 GO annotations based on evolutionary models"/>
</dbReference>
<dbReference type="PhylomeDB" id="Q8NHM5"/>
<dbReference type="TreeFam" id="TF106480"/>
<dbReference type="BioCyc" id="MetaCyc:HS01631-MONOMER"/>
<dbReference type="PathwayCommons" id="Q8NHM5"/>
<dbReference type="Reactome" id="R-HSA-3214842">
    <property type="pathway name" value="HDMs demethylate histones"/>
</dbReference>
<dbReference type="SignaLink" id="Q8NHM5"/>
<dbReference type="SIGNOR" id="Q8NHM5"/>
<dbReference type="BioGRID-ORCS" id="84678">
    <property type="hits" value="28 hits in 1212 CRISPR screens"/>
</dbReference>
<dbReference type="CD-CODE" id="91857CE7">
    <property type="entry name" value="Nucleolus"/>
</dbReference>
<dbReference type="ChiTaRS" id="KDM2B">
    <property type="organism name" value="human"/>
</dbReference>
<dbReference type="EvolutionaryTrace" id="Q8NHM5"/>
<dbReference type="GenomeRNAi" id="84678"/>
<dbReference type="Pharos" id="Q8NHM5">
    <property type="development level" value="Tchem"/>
</dbReference>
<dbReference type="PRO" id="PR:Q8NHM5"/>
<dbReference type="Proteomes" id="UP000005640">
    <property type="component" value="Chromosome 12"/>
</dbReference>
<dbReference type="RNAct" id="Q8NHM5">
    <property type="molecule type" value="protein"/>
</dbReference>
<dbReference type="Bgee" id="ENSG00000089094">
    <property type="expression patterns" value="Expressed in oviduct epithelium and 184 other cell types or tissues"/>
</dbReference>
<dbReference type="ExpressionAtlas" id="Q8NHM5">
    <property type="expression patterns" value="baseline and differential"/>
</dbReference>
<dbReference type="GO" id="GO:0005694">
    <property type="term" value="C:chromosome"/>
    <property type="evidence" value="ECO:0007669"/>
    <property type="project" value="UniProtKB-SubCell"/>
</dbReference>
<dbReference type="GO" id="GO:0005730">
    <property type="term" value="C:nucleolus"/>
    <property type="evidence" value="ECO:0007669"/>
    <property type="project" value="UniProtKB-SubCell"/>
</dbReference>
<dbReference type="GO" id="GO:0005654">
    <property type="term" value="C:nucleoplasm"/>
    <property type="evidence" value="ECO:0000314"/>
    <property type="project" value="HPA"/>
</dbReference>
<dbReference type="GO" id="GO:0005634">
    <property type="term" value="C:nucleus"/>
    <property type="evidence" value="ECO:0000314"/>
    <property type="project" value="UniProtKB"/>
</dbReference>
<dbReference type="GO" id="GO:0031519">
    <property type="term" value="C:PcG protein complex"/>
    <property type="evidence" value="ECO:0000314"/>
    <property type="project" value="UniProtKB"/>
</dbReference>
<dbReference type="GO" id="GO:0003677">
    <property type="term" value="F:DNA binding"/>
    <property type="evidence" value="ECO:0000303"/>
    <property type="project" value="UniProtKB"/>
</dbReference>
<dbReference type="GO" id="GO:0032452">
    <property type="term" value="F:histone demethylase activity"/>
    <property type="evidence" value="ECO:0000318"/>
    <property type="project" value="GO_Central"/>
</dbReference>
<dbReference type="GO" id="GO:0051864">
    <property type="term" value="F:histone H3K36 demethylase activity"/>
    <property type="evidence" value="ECO:0000314"/>
    <property type="project" value="UniProtKB"/>
</dbReference>
<dbReference type="GO" id="GO:0140680">
    <property type="term" value="F:histone H3K36me/H3K36me2 demethylase activity"/>
    <property type="evidence" value="ECO:0007669"/>
    <property type="project" value="UniProtKB-EC"/>
</dbReference>
<dbReference type="GO" id="GO:0000978">
    <property type="term" value="F:RNA polymerase II cis-regulatory region sequence-specific DNA binding"/>
    <property type="evidence" value="ECO:0007669"/>
    <property type="project" value="Ensembl"/>
</dbReference>
<dbReference type="GO" id="GO:0019843">
    <property type="term" value="F:rRNA binding"/>
    <property type="evidence" value="ECO:0007669"/>
    <property type="project" value="UniProtKB-KW"/>
</dbReference>
<dbReference type="GO" id="GO:0003712">
    <property type="term" value="F:transcription coregulator activity"/>
    <property type="evidence" value="ECO:0000318"/>
    <property type="project" value="GO_Central"/>
</dbReference>
<dbReference type="GO" id="GO:0045322">
    <property type="term" value="F:unmethylated CpG binding"/>
    <property type="evidence" value="ECO:0000314"/>
    <property type="project" value="UniProtKB"/>
</dbReference>
<dbReference type="GO" id="GO:0008270">
    <property type="term" value="F:zinc ion binding"/>
    <property type="evidence" value="ECO:0000314"/>
    <property type="project" value="UniProtKB"/>
</dbReference>
<dbReference type="GO" id="GO:0006338">
    <property type="term" value="P:chromatin remodeling"/>
    <property type="evidence" value="ECO:0000314"/>
    <property type="project" value="UniProtKB"/>
</dbReference>
<dbReference type="GO" id="GO:0048596">
    <property type="term" value="P:embryonic camera-type eye morphogenesis"/>
    <property type="evidence" value="ECO:0000250"/>
    <property type="project" value="BHF-UCL"/>
</dbReference>
<dbReference type="GO" id="GO:0030900">
    <property type="term" value="P:forebrain development"/>
    <property type="evidence" value="ECO:0000250"/>
    <property type="project" value="BHF-UCL"/>
</dbReference>
<dbReference type="GO" id="GO:0021592">
    <property type="term" value="P:fourth ventricle development"/>
    <property type="evidence" value="ECO:0000250"/>
    <property type="project" value="BHF-UCL"/>
</dbReference>
<dbReference type="GO" id="GO:0030902">
    <property type="term" value="P:hindbrain development"/>
    <property type="evidence" value="ECO:0000250"/>
    <property type="project" value="BHF-UCL"/>
</dbReference>
<dbReference type="GO" id="GO:0021993">
    <property type="term" value="P:initiation of neural tube closure"/>
    <property type="evidence" value="ECO:0000250"/>
    <property type="project" value="BHF-UCL"/>
</dbReference>
<dbReference type="GO" id="GO:0021670">
    <property type="term" value="P:lateral ventricle development"/>
    <property type="evidence" value="ECO:0000250"/>
    <property type="project" value="BHF-UCL"/>
</dbReference>
<dbReference type="GO" id="GO:0030901">
    <property type="term" value="P:midbrain development"/>
    <property type="evidence" value="ECO:0000250"/>
    <property type="project" value="BHF-UCL"/>
</dbReference>
<dbReference type="GO" id="GO:0021555">
    <property type="term" value="P:midbrain-hindbrain boundary morphogenesis"/>
    <property type="evidence" value="ECO:0000250"/>
    <property type="project" value="BHF-UCL"/>
</dbReference>
<dbReference type="GO" id="GO:2000178">
    <property type="term" value="P:negative regulation of neural precursor cell proliferation"/>
    <property type="evidence" value="ECO:0000250"/>
    <property type="project" value="BHF-UCL"/>
</dbReference>
<dbReference type="GO" id="GO:0043524">
    <property type="term" value="P:negative regulation of neuron apoptotic process"/>
    <property type="evidence" value="ECO:0000250"/>
    <property type="project" value="BHF-UCL"/>
</dbReference>
<dbReference type="GO" id="GO:0000122">
    <property type="term" value="P:negative regulation of transcription by RNA polymerase II"/>
    <property type="evidence" value="ECO:0000250"/>
    <property type="project" value="BHF-UCL"/>
</dbReference>
<dbReference type="GO" id="GO:0030307">
    <property type="term" value="P:positive regulation of cell growth"/>
    <property type="evidence" value="ECO:0007669"/>
    <property type="project" value="Ensembl"/>
</dbReference>
<dbReference type="GO" id="GO:1902459">
    <property type="term" value="P:positive regulation of stem cell population maintenance"/>
    <property type="evidence" value="ECO:0007669"/>
    <property type="project" value="Ensembl"/>
</dbReference>
<dbReference type="GO" id="GO:0006357">
    <property type="term" value="P:regulation of transcription by RNA polymerase II"/>
    <property type="evidence" value="ECO:0000318"/>
    <property type="project" value="GO_Central"/>
</dbReference>
<dbReference type="GO" id="GO:0007283">
    <property type="term" value="P:spermatogenesis"/>
    <property type="evidence" value="ECO:0000250"/>
    <property type="project" value="BHF-UCL"/>
</dbReference>
<dbReference type="GO" id="GO:0021678">
    <property type="term" value="P:third ventricle development"/>
    <property type="evidence" value="ECO:0000250"/>
    <property type="project" value="BHF-UCL"/>
</dbReference>
<dbReference type="CDD" id="cd21785">
    <property type="entry name" value="CTD_KDM2B"/>
    <property type="match status" value="1"/>
</dbReference>
<dbReference type="CDD" id="cd22180">
    <property type="entry name" value="F-box_FBXL10"/>
    <property type="match status" value="1"/>
</dbReference>
<dbReference type="CDD" id="cd15644">
    <property type="entry name" value="PHD_KDM2B"/>
    <property type="match status" value="1"/>
</dbReference>
<dbReference type="FunFam" id="1.20.58.1360:FF:000002">
    <property type="entry name" value="Lysine (K)-specific demethylase 2B"/>
    <property type="match status" value="2"/>
</dbReference>
<dbReference type="FunFam" id="2.60.120.650:FF:000005">
    <property type="entry name" value="lysine-specific demethylase 2A isoform X1"/>
    <property type="match status" value="1"/>
</dbReference>
<dbReference type="FunFam" id="3.80.10.10:FF:000011">
    <property type="entry name" value="Lysine-specific demethylase 2B isoform X1"/>
    <property type="match status" value="1"/>
</dbReference>
<dbReference type="FunFam" id="3.30.40.10:FF:000020">
    <property type="entry name" value="lysine-specific demethylase 2B isoform X1"/>
    <property type="match status" value="1"/>
</dbReference>
<dbReference type="Gene3D" id="1.20.58.1360">
    <property type="match status" value="1"/>
</dbReference>
<dbReference type="Gene3D" id="2.60.120.650">
    <property type="entry name" value="Cupin"/>
    <property type="match status" value="1"/>
</dbReference>
<dbReference type="Gene3D" id="3.80.10.10">
    <property type="entry name" value="Ribonuclease Inhibitor"/>
    <property type="match status" value="1"/>
</dbReference>
<dbReference type="Gene3D" id="3.30.40.10">
    <property type="entry name" value="Zinc/RING finger domain, C3HC4 (zinc finger)"/>
    <property type="match status" value="1"/>
</dbReference>
<dbReference type="InterPro" id="IPR041667">
    <property type="entry name" value="Cupin_8"/>
</dbReference>
<dbReference type="InterPro" id="IPR001810">
    <property type="entry name" value="F-box_dom"/>
</dbReference>
<dbReference type="InterPro" id="IPR041070">
    <property type="entry name" value="JHD"/>
</dbReference>
<dbReference type="InterPro" id="IPR050690">
    <property type="entry name" value="JHDM1_Histone_Demethylase"/>
</dbReference>
<dbReference type="InterPro" id="IPR003347">
    <property type="entry name" value="JmjC_dom"/>
</dbReference>
<dbReference type="InterPro" id="IPR006553">
    <property type="entry name" value="Leu-rich_rpt_Cys-con_subtyp"/>
</dbReference>
<dbReference type="InterPro" id="IPR032675">
    <property type="entry name" value="LRR_dom_sf"/>
</dbReference>
<dbReference type="InterPro" id="IPR002857">
    <property type="entry name" value="Znf_CXXC"/>
</dbReference>
<dbReference type="InterPro" id="IPR011011">
    <property type="entry name" value="Znf_FYVE_PHD"/>
</dbReference>
<dbReference type="InterPro" id="IPR001965">
    <property type="entry name" value="Znf_PHD"/>
</dbReference>
<dbReference type="InterPro" id="IPR019787">
    <property type="entry name" value="Znf_PHD-finger"/>
</dbReference>
<dbReference type="InterPro" id="IPR013083">
    <property type="entry name" value="Znf_RING/FYVE/PHD"/>
</dbReference>
<dbReference type="PANTHER" id="PTHR23123">
    <property type="entry name" value="PHD/F-BOX CONTAINING PROTEIN"/>
    <property type="match status" value="1"/>
</dbReference>
<dbReference type="Pfam" id="PF13621">
    <property type="entry name" value="Cupin_8"/>
    <property type="match status" value="1"/>
</dbReference>
<dbReference type="Pfam" id="PF12937">
    <property type="entry name" value="F-box-like"/>
    <property type="match status" value="1"/>
</dbReference>
<dbReference type="Pfam" id="PF17811">
    <property type="entry name" value="JHD"/>
    <property type="match status" value="1"/>
</dbReference>
<dbReference type="Pfam" id="PF16866">
    <property type="entry name" value="PHD_4"/>
    <property type="match status" value="1"/>
</dbReference>
<dbReference type="Pfam" id="PF02008">
    <property type="entry name" value="zf-CXXC"/>
    <property type="match status" value="1"/>
</dbReference>
<dbReference type="SMART" id="SM00558">
    <property type="entry name" value="JmjC"/>
    <property type="match status" value="1"/>
</dbReference>
<dbReference type="SMART" id="SM00367">
    <property type="entry name" value="LRR_CC"/>
    <property type="match status" value="6"/>
</dbReference>
<dbReference type="SMART" id="SM00249">
    <property type="entry name" value="PHD"/>
    <property type="match status" value="1"/>
</dbReference>
<dbReference type="SUPFAM" id="SSF51197">
    <property type="entry name" value="Clavaminate synthase-like"/>
    <property type="match status" value="1"/>
</dbReference>
<dbReference type="SUPFAM" id="SSF57903">
    <property type="entry name" value="FYVE/PHD zinc finger"/>
    <property type="match status" value="1"/>
</dbReference>
<dbReference type="SUPFAM" id="SSF52047">
    <property type="entry name" value="RNI-like"/>
    <property type="match status" value="1"/>
</dbReference>
<dbReference type="PROSITE" id="PS51184">
    <property type="entry name" value="JMJC"/>
    <property type="match status" value="1"/>
</dbReference>
<dbReference type="PROSITE" id="PS51058">
    <property type="entry name" value="ZF_CXXC"/>
    <property type="match status" value="1"/>
</dbReference>
<dbReference type="PROSITE" id="PS50016">
    <property type="entry name" value="ZF_PHD_2"/>
    <property type="match status" value="1"/>
</dbReference>
<accession>Q8NHM5</accession>
<accession>A8MRS1</accession>
<accession>Q1RLM7</accession>
<accession>Q8NCI2</accession>
<accession>Q96HC7</accession>
<accession>Q96SL0</accession>
<accession>Q96T03</accession>
<accession>Q9NS96</accession>
<accession>Q9UF75</accession>
<protein>
    <recommendedName>
        <fullName>Lysine-specific demethylase 2B</fullName>
        <ecNumber evidence="8 10">1.14.11.27</ecNumber>
    </recommendedName>
    <alternativeName>
        <fullName>CXXC-type zinc finger protein 2</fullName>
    </alternativeName>
    <alternativeName>
        <fullName>F-box and leucine-rich repeat protein 10</fullName>
    </alternativeName>
    <alternativeName>
        <fullName>F-box protein FBL10</fullName>
    </alternativeName>
    <alternativeName>
        <fullName>F-box/LRR-repeat protein 10</fullName>
    </alternativeName>
    <alternativeName>
        <fullName>JmjC domain-containing histone demethylation protein 1B</fullName>
    </alternativeName>
    <alternativeName>
        <fullName>Jumonji domain-containing EMSY-interactor methyltransferase motif protein</fullName>
        <shortName>Protein JEMMA</shortName>
    </alternativeName>
    <alternativeName>
        <fullName>Protein-containing CXXC domain 2</fullName>
    </alternativeName>
    <alternativeName>
        <fullName>[Histone-H3]-lysine-36 demethylase 1B</fullName>
    </alternativeName>
</protein>
<gene>
    <name type="primary">KDM2B</name>
    <name type="synonym">CXXC2</name>
    <name type="synonym">FBL10</name>
    <name type="synonym">FBXL10</name>
    <name type="synonym">JHDM1B</name>
    <name evidence="17" type="synonym">NDY1</name>
    <name type="synonym">PCCX2</name>
</gene>
<reference key="1">
    <citation type="submission" date="2002-05" db="EMBL/GenBank/DDBJ databases">
        <title>JEMMA (Jumonji domain, EMSY-interactor, methyltransferase motif) is a novel protein which interacts with EMSY.</title>
        <authorList>
            <person name="Hughes-Davies L."/>
        </authorList>
    </citation>
    <scope>NUCLEOTIDE SEQUENCE [MRNA] (ISOFORM 1)</scope>
</reference>
<reference key="2">
    <citation type="journal article" date="2004" name="Nat. Genet.">
        <title>Complete sequencing and characterization of 21,243 full-length human cDNAs.</title>
        <authorList>
            <person name="Ota T."/>
            <person name="Suzuki Y."/>
            <person name="Nishikawa T."/>
            <person name="Otsuki T."/>
            <person name="Sugiyama T."/>
            <person name="Irie R."/>
            <person name="Wakamatsu A."/>
            <person name="Hayashi K."/>
            <person name="Sato H."/>
            <person name="Nagai K."/>
            <person name="Kimura K."/>
            <person name="Makita H."/>
            <person name="Sekine M."/>
            <person name="Obayashi M."/>
            <person name="Nishi T."/>
            <person name="Shibahara T."/>
            <person name="Tanaka T."/>
            <person name="Ishii S."/>
            <person name="Yamamoto J."/>
            <person name="Saito K."/>
            <person name="Kawai Y."/>
            <person name="Isono Y."/>
            <person name="Nakamura Y."/>
            <person name="Nagahari K."/>
            <person name="Murakami K."/>
            <person name="Yasuda T."/>
            <person name="Iwayanagi T."/>
            <person name="Wagatsuma M."/>
            <person name="Shiratori A."/>
            <person name="Sudo H."/>
            <person name="Hosoiri T."/>
            <person name="Kaku Y."/>
            <person name="Kodaira H."/>
            <person name="Kondo H."/>
            <person name="Sugawara M."/>
            <person name="Takahashi M."/>
            <person name="Kanda K."/>
            <person name="Yokoi T."/>
            <person name="Furuya T."/>
            <person name="Kikkawa E."/>
            <person name="Omura Y."/>
            <person name="Abe K."/>
            <person name="Kamihara K."/>
            <person name="Katsuta N."/>
            <person name="Sato K."/>
            <person name="Tanikawa M."/>
            <person name="Yamazaki M."/>
            <person name="Ninomiya K."/>
            <person name="Ishibashi T."/>
            <person name="Yamashita H."/>
            <person name="Murakawa K."/>
            <person name="Fujimori K."/>
            <person name="Tanai H."/>
            <person name="Kimata M."/>
            <person name="Watanabe M."/>
            <person name="Hiraoka S."/>
            <person name="Chiba Y."/>
            <person name="Ishida S."/>
            <person name="Ono Y."/>
            <person name="Takiguchi S."/>
            <person name="Watanabe S."/>
            <person name="Yosida M."/>
            <person name="Hotuta T."/>
            <person name="Kusano J."/>
            <person name="Kanehori K."/>
            <person name="Takahashi-Fujii A."/>
            <person name="Hara H."/>
            <person name="Tanase T.-O."/>
            <person name="Nomura Y."/>
            <person name="Togiya S."/>
            <person name="Komai F."/>
            <person name="Hara R."/>
            <person name="Takeuchi K."/>
            <person name="Arita M."/>
            <person name="Imose N."/>
            <person name="Musashino K."/>
            <person name="Yuuki H."/>
            <person name="Oshima A."/>
            <person name="Sasaki N."/>
            <person name="Aotsuka S."/>
            <person name="Yoshikawa Y."/>
            <person name="Matsunawa H."/>
            <person name="Ichihara T."/>
            <person name="Shiohata N."/>
            <person name="Sano S."/>
            <person name="Moriya S."/>
            <person name="Momiyama H."/>
            <person name="Satoh N."/>
            <person name="Takami S."/>
            <person name="Terashima Y."/>
            <person name="Suzuki O."/>
            <person name="Nakagawa S."/>
            <person name="Senoh A."/>
            <person name="Mizoguchi H."/>
            <person name="Goto Y."/>
            <person name="Shimizu F."/>
            <person name="Wakebe H."/>
            <person name="Hishigaki H."/>
            <person name="Watanabe T."/>
            <person name="Sugiyama A."/>
            <person name="Takemoto M."/>
            <person name="Kawakami B."/>
            <person name="Yamazaki M."/>
            <person name="Watanabe K."/>
            <person name="Kumagai A."/>
            <person name="Itakura S."/>
            <person name="Fukuzumi Y."/>
            <person name="Fujimori Y."/>
            <person name="Komiyama M."/>
            <person name="Tashiro H."/>
            <person name="Tanigami A."/>
            <person name="Fujiwara T."/>
            <person name="Ono T."/>
            <person name="Yamada K."/>
            <person name="Fujii Y."/>
            <person name="Ozaki K."/>
            <person name="Hirao M."/>
            <person name="Ohmori Y."/>
            <person name="Kawabata A."/>
            <person name="Hikiji T."/>
            <person name="Kobatake N."/>
            <person name="Inagaki H."/>
            <person name="Ikema Y."/>
            <person name="Okamoto S."/>
            <person name="Okitani R."/>
            <person name="Kawakami T."/>
            <person name="Noguchi S."/>
            <person name="Itoh T."/>
            <person name="Shigeta K."/>
            <person name="Senba T."/>
            <person name="Matsumura K."/>
            <person name="Nakajima Y."/>
            <person name="Mizuno T."/>
            <person name="Morinaga M."/>
            <person name="Sasaki M."/>
            <person name="Togashi T."/>
            <person name="Oyama M."/>
            <person name="Hata H."/>
            <person name="Watanabe M."/>
            <person name="Komatsu T."/>
            <person name="Mizushima-Sugano J."/>
            <person name="Satoh T."/>
            <person name="Shirai Y."/>
            <person name="Takahashi Y."/>
            <person name="Nakagawa K."/>
            <person name="Okumura K."/>
            <person name="Nagase T."/>
            <person name="Nomura N."/>
            <person name="Kikuchi H."/>
            <person name="Masuho Y."/>
            <person name="Yamashita R."/>
            <person name="Nakai K."/>
            <person name="Yada T."/>
            <person name="Nakamura Y."/>
            <person name="Ohara O."/>
            <person name="Isogai T."/>
            <person name="Sugano S."/>
        </authorList>
    </citation>
    <scope>NUCLEOTIDE SEQUENCE [LARGE SCALE MRNA] (ISOFORM 4)</scope>
    <scope>NUCLEOTIDE SEQUENCE [LARGE SCALE MRNA] OF 504-1336 (ISOFORM 1)</scope>
    <source>
        <tissue>Hippocampus</tissue>
    </source>
</reference>
<reference key="3">
    <citation type="journal article" date="2006" name="Nature">
        <title>The finished DNA sequence of human chromosome 12.</title>
        <authorList>
            <person name="Scherer S.E."/>
            <person name="Muzny D.M."/>
            <person name="Buhay C.J."/>
            <person name="Chen R."/>
            <person name="Cree A."/>
            <person name="Ding Y."/>
            <person name="Dugan-Rocha S."/>
            <person name="Gill R."/>
            <person name="Gunaratne P."/>
            <person name="Harris R.A."/>
            <person name="Hawes A.C."/>
            <person name="Hernandez J."/>
            <person name="Hodgson A.V."/>
            <person name="Hume J."/>
            <person name="Jackson A."/>
            <person name="Khan Z.M."/>
            <person name="Kovar-Smith C."/>
            <person name="Lewis L.R."/>
            <person name="Lozado R.J."/>
            <person name="Metzker M.L."/>
            <person name="Milosavljevic A."/>
            <person name="Miner G.R."/>
            <person name="Montgomery K.T."/>
            <person name="Morgan M.B."/>
            <person name="Nazareth L.V."/>
            <person name="Scott G."/>
            <person name="Sodergren E."/>
            <person name="Song X.-Z."/>
            <person name="Steffen D."/>
            <person name="Lovering R.C."/>
            <person name="Wheeler D.A."/>
            <person name="Worley K.C."/>
            <person name="Yuan Y."/>
            <person name="Zhang Z."/>
            <person name="Adams C.Q."/>
            <person name="Ansari-Lari M.A."/>
            <person name="Ayele M."/>
            <person name="Brown M.J."/>
            <person name="Chen G."/>
            <person name="Chen Z."/>
            <person name="Clerc-Blankenburg K.P."/>
            <person name="Davis C."/>
            <person name="Delgado O."/>
            <person name="Dinh H.H."/>
            <person name="Draper H."/>
            <person name="Gonzalez-Garay M.L."/>
            <person name="Havlak P."/>
            <person name="Jackson L.R."/>
            <person name="Jacob L.S."/>
            <person name="Kelly S.H."/>
            <person name="Li L."/>
            <person name="Li Z."/>
            <person name="Liu J."/>
            <person name="Liu W."/>
            <person name="Lu J."/>
            <person name="Maheshwari M."/>
            <person name="Nguyen B.-V."/>
            <person name="Okwuonu G.O."/>
            <person name="Pasternak S."/>
            <person name="Perez L.M."/>
            <person name="Plopper F.J.H."/>
            <person name="Santibanez J."/>
            <person name="Shen H."/>
            <person name="Tabor P.E."/>
            <person name="Verduzco D."/>
            <person name="Waldron L."/>
            <person name="Wang Q."/>
            <person name="Williams G.A."/>
            <person name="Zhang J."/>
            <person name="Zhou J."/>
            <person name="Allen C.C."/>
            <person name="Amin A.G."/>
            <person name="Anyalebechi V."/>
            <person name="Bailey M."/>
            <person name="Barbaria J.A."/>
            <person name="Bimage K.E."/>
            <person name="Bryant N.P."/>
            <person name="Burch P.E."/>
            <person name="Burkett C.E."/>
            <person name="Burrell K.L."/>
            <person name="Calderon E."/>
            <person name="Cardenas V."/>
            <person name="Carter K."/>
            <person name="Casias K."/>
            <person name="Cavazos I."/>
            <person name="Cavazos S.R."/>
            <person name="Ceasar H."/>
            <person name="Chacko J."/>
            <person name="Chan S.N."/>
            <person name="Chavez D."/>
            <person name="Christopoulos C."/>
            <person name="Chu J."/>
            <person name="Cockrell R."/>
            <person name="Cox C.D."/>
            <person name="Dang M."/>
            <person name="Dathorne S.R."/>
            <person name="David R."/>
            <person name="Davis C.M."/>
            <person name="Davy-Carroll L."/>
            <person name="Deshazo D.R."/>
            <person name="Donlin J.E."/>
            <person name="D'Souza L."/>
            <person name="Eaves K.A."/>
            <person name="Egan A."/>
            <person name="Emery-Cohen A.J."/>
            <person name="Escotto M."/>
            <person name="Flagg N."/>
            <person name="Forbes L.D."/>
            <person name="Gabisi A.M."/>
            <person name="Garza M."/>
            <person name="Hamilton C."/>
            <person name="Henderson N."/>
            <person name="Hernandez O."/>
            <person name="Hines S."/>
            <person name="Hogues M.E."/>
            <person name="Huang M."/>
            <person name="Idlebird D.G."/>
            <person name="Johnson R."/>
            <person name="Jolivet A."/>
            <person name="Jones S."/>
            <person name="Kagan R."/>
            <person name="King L.M."/>
            <person name="Leal B."/>
            <person name="Lebow H."/>
            <person name="Lee S."/>
            <person name="LeVan J.M."/>
            <person name="Lewis L.C."/>
            <person name="London P."/>
            <person name="Lorensuhewa L.M."/>
            <person name="Loulseged H."/>
            <person name="Lovett D.A."/>
            <person name="Lucier A."/>
            <person name="Lucier R.L."/>
            <person name="Ma J."/>
            <person name="Madu R.C."/>
            <person name="Mapua P."/>
            <person name="Martindale A.D."/>
            <person name="Martinez E."/>
            <person name="Massey E."/>
            <person name="Mawhiney S."/>
            <person name="Meador M.G."/>
            <person name="Mendez S."/>
            <person name="Mercado C."/>
            <person name="Mercado I.C."/>
            <person name="Merritt C.E."/>
            <person name="Miner Z.L."/>
            <person name="Minja E."/>
            <person name="Mitchell T."/>
            <person name="Mohabbat F."/>
            <person name="Mohabbat K."/>
            <person name="Montgomery B."/>
            <person name="Moore N."/>
            <person name="Morris S."/>
            <person name="Munidasa M."/>
            <person name="Ngo R.N."/>
            <person name="Nguyen N.B."/>
            <person name="Nickerson E."/>
            <person name="Nwaokelemeh O.O."/>
            <person name="Nwokenkwo S."/>
            <person name="Obregon M."/>
            <person name="Oguh M."/>
            <person name="Oragunye N."/>
            <person name="Oviedo R.J."/>
            <person name="Parish B.J."/>
            <person name="Parker D.N."/>
            <person name="Parrish J."/>
            <person name="Parks K.L."/>
            <person name="Paul H.A."/>
            <person name="Payton B.A."/>
            <person name="Perez A."/>
            <person name="Perrin W."/>
            <person name="Pickens A."/>
            <person name="Primus E.L."/>
            <person name="Pu L.-L."/>
            <person name="Puazo M."/>
            <person name="Quiles M.M."/>
            <person name="Quiroz J.B."/>
            <person name="Rabata D."/>
            <person name="Reeves K."/>
            <person name="Ruiz S.J."/>
            <person name="Shao H."/>
            <person name="Sisson I."/>
            <person name="Sonaike T."/>
            <person name="Sorelle R.P."/>
            <person name="Sutton A.E."/>
            <person name="Svatek A.F."/>
            <person name="Svetz L.A."/>
            <person name="Tamerisa K.S."/>
            <person name="Taylor T.R."/>
            <person name="Teague B."/>
            <person name="Thomas N."/>
            <person name="Thorn R.D."/>
            <person name="Trejos Z.Y."/>
            <person name="Trevino B.K."/>
            <person name="Ukegbu O.N."/>
            <person name="Urban J.B."/>
            <person name="Vasquez L.I."/>
            <person name="Vera V.A."/>
            <person name="Villasana D.M."/>
            <person name="Wang L."/>
            <person name="Ward-Moore S."/>
            <person name="Warren J.T."/>
            <person name="Wei X."/>
            <person name="White F."/>
            <person name="Williamson A.L."/>
            <person name="Wleczyk R."/>
            <person name="Wooden H.S."/>
            <person name="Wooden S.H."/>
            <person name="Yen J."/>
            <person name="Yoon L."/>
            <person name="Yoon V."/>
            <person name="Zorrilla S.E."/>
            <person name="Nelson D."/>
            <person name="Kucherlapati R."/>
            <person name="Weinstock G."/>
            <person name="Gibbs R.A."/>
        </authorList>
    </citation>
    <scope>NUCLEOTIDE SEQUENCE [LARGE SCALE GENOMIC DNA]</scope>
</reference>
<reference key="4">
    <citation type="journal article" date="2004" name="Genome Res.">
        <title>The status, quality, and expansion of the NIH full-length cDNA project: the Mammalian Gene Collection (MGC).</title>
        <authorList>
            <consortium name="The MGC Project Team"/>
        </authorList>
    </citation>
    <scope>NUCLEOTIDE SEQUENCE [LARGE SCALE MRNA] (ISOFORM 5)</scope>
    <scope>NUCLEOTIDE SEQUENCE [LARGE SCALE MRNA] OF 710-1336 (ISOFORM 1)</scope>
    <source>
        <tissue>Brain</tissue>
    </source>
</reference>
<reference key="5">
    <citation type="journal article" date="2007" name="BMC Genomics">
        <title>The full-ORF clone resource of the German cDNA consortium.</title>
        <authorList>
            <person name="Bechtel S."/>
            <person name="Rosenfelder H."/>
            <person name="Duda A."/>
            <person name="Schmidt C.P."/>
            <person name="Ernst U."/>
            <person name="Wellenreuther R."/>
            <person name="Mehrle A."/>
            <person name="Schuster C."/>
            <person name="Bahr A."/>
            <person name="Bloecker H."/>
            <person name="Heubner D."/>
            <person name="Hoerlein A."/>
            <person name="Michel G."/>
            <person name="Wedler H."/>
            <person name="Koehrer K."/>
            <person name="Ottenwaelder B."/>
            <person name="Poustka A."/>
            <person name="Wiemann S."/>
            <person name="Schupp I."/>
        </authorList>
    </citation>
    <scope>NUCLEOTIDE SEQUENCE [LARGE SCALE MRNA] OF 129-1336 (ISOFORM 3)</scope>
    <source>
        <tissue>Testis</tissue>
    </source>
</reference>
<reference key="6">
    <citation type="submission" date="1999-08" db="EMBL/GenBank/DDBJ databases">
        <authorList>
            <person name="Fujino T."/>
            <person name="Hasegawa M."/>
            <person name="Shibata S."/>
            <person name="Kishimoto T."/>
            <person name="Imai S."/>
            <person name="Takano T."/>
        </authorList>
    </citation>
    <scope>NUCLEOTIDE SEQUENCE [MRNA] OF 480-1336 (ISOFORM 2)</scope>
    <source>
        <tissue>Fibroblast</tissue>
    </source>
</reference>
<reference key="7">
    <citation type="journal article" date="2006" name="Nature">
        <title>Histone demethylation by a family of JmjC domain-containing proteins.</title>
        <authorList>
            <person name="Tsukada Y."/>
            <person name="Fang J."/>
            <person name="Erdjument-Bromage H."/>
            <person name="Warren M.E."/>
            <person name="Borchers C.H."/>
            <person name="Tempst P."/>
            <person name="Zhang Y."/>
        </authorList>
    </citation>
    <scope>FUNCTION</scope>
    <scope>CATALYTIC ACTIVITY</scope>
</reference>
<reference key="8">
    <citation type="journal article" date="2007" name="Nature">
        <title>JHDM1B/FBXL10 is a nucleolar protein that represses transcription of ribosomal RNA genes.</title>
        <authorList>
            <person name="Frescas D."/>
            <person name="Guardavaccaro D."/>
            <person name="Bassermann F."/>
            <person name="Koyama-Nasu R."/>
            <person name="Pagano M."/>
        </authorList>
    </citation>
    <scope>FUNCTION</scope>
    <scope>SUBCELLULAR LOCATION</scope>
    <scope>DOMAIN JMJC</scope>
</reference>
<reference key="9">
    <citation type="journal article" date="2008" name="Proc. Natl. Acad. Sci. U.S.A.">
        <title>A quantitative atlas of mitotic phosphorylation.</title>
        <authorList>
            <person name="Dephoure N."/>
            <person name="Zhou C."/>
            <person name="Villen J."/>
            <person name="Beausoleil S.A."/>
            <person name="Bakalarski C.E."/>
            <person name="Elledge S.J."/>
            <person name="Gygi S.P."/>
        </authorList>
    </citation>
    <scope>IDENTIFICATION BY MASS SPECTROMETRY [LARGE SCALE ANALYSIS]</scope>
    <source>
        <tissue>Cervix carcinoma</tissue>
    </source>
</reference>
<reference key="10">
    <citation type="journal article" date="2009" name="Anal. Chem.">
        <title>Lys-N and trypsin cover complementary parts of the phosphoproteome in a refined SCX-based approach.</title>
        <authorList>
            <person name="Gauci S."/>
            <person name="Helbig A.O."/>
            <person name="Slijper M."/>
            <person name="Krijgsveld J."/>
            <person name="Heck A.J."/>
            <person name="Mohammed S."/>
        </authorList>
    </citation>
    <scope>IDENTIFICATION BY MASS SPECTROMETRY [LARGE SCALE ANALYSIS]</scope>
</reference>
<reference key="11">
    <citation type="journal article" date="2009" name="Sci. Signal.">
        <title>Quantitative phosphoproteomic analysis of T cell receptor signaling reveals system-wide modulation of protein-protein interactions.</title>
        <authorList>
            <person name="Mayya V."/>
            <person name="Lundgren D.H."/>
            <person name="Hwang S.-I."/>
            <person name="Rezaul K."/>
            <person name="Wu L."/>
            <person name="Eng J.K."/>
            <person name="Rodionov V."/>
            <person name="Han D.K."/>
        </authorList>
    </citation>
    <scope>PHOSPHORYLATION [LARGE SCALE ANALYSIS] AT THR-493; SER-975 AND SER-979</scope>
    <scope>IDENTIFICATION BY MASS SPECTROMETRY [LARGE SCALE ANALYSIS]</scope>
    <source>
        <tissue>Leukemic T-cell</tissue>
    </source>
</reference>
<reference key="12">
    <citation type="journal article" date="2010" name="Sci. Signal.">
        <title>Quantitative phosphoproteomics reveals widespread full phosphorylation site occupancy during mitosis.</title>
        <authorList>
            <person name="Olsen J.V."/>
            <person name="Vermeulen M."/>
            <person name="Santamaria A."/>
            <person name="Kumar C."/>
            <person name="Miller M.L."/>
            <person name="Jensen L.J."/>
            <person name="Gnad F."/>
            <person name="Cox J."/>
            <person name="Jensen T.S."/>
            <person name="Nigg E.A."/>
            <person name="Brunak S."/>
            <person name="Mann M."/>
        </authorList>
    </citation>
    <scope>IDENTIFICATION BY MASS SPECTROMETRY [LARGE SCALE ANALYSIS]</scope>
    <source>
        <tissue>Cervix carcinoma</tissue>
    </source>
</reference>
<reference key="13">
    <citation type="journal article" date="2011" name="Sci. Signal.">
        <title>System-wide temporal characterization of the proteome and phosphoproteome of human embryonic stem cell differentiation.</title>
        <authorList>
            <person name="Rigbolt K.T."/>
            <person name="Prokhorova T.A."/>
            <person name="Akimov V."/>
            <person name="Henningsen J."/>
            <person name="Johansen P.T."/>
            <person name="Kratchmarova I."/>
            <person name="Kassem M."/>
            <person name="Mann M."/>
            <person name="Olsen J.V."/>
            <person name="Blagoev B."/>
        </authorList>
    </citation>
    <scope>PHOSPHORYLATION [LARGE SCALE ANALYSIS] AT SER-474; SER-477; THR-493 AND SER-497</scope>
    <scope>IDENTIFICATION BY MASS SPECTROMETRY [LARGE SCALE ANALYSIS]</scope>
</reference>
<reference key="14">
    <citation type="journal article" date="2013" name="J. Proteome Res.">
        <title>Toward a comprehensive characterization of a human cancer cell phosphoproteome.</title>
        <authorList>
            <person name="Zhou H."/>
            <person name="Di Palma S."/>
            <person name="Preisinger C."/>
            <person name="Peng M."/>
            <person name="Polat A.N."/>
            <person name="Heck A.J."/>
            <person name="Mohammed S."/>
        </authorList>
    </citation>
    <scope>PHOSPHORYLATION [LARGE SCALE ANALYSIS] AT SER-57; SER-474; SER-951; SER-975; SER-979; SER-1018 AND SER-1031</scope>
    <scope>IDENTIFICATION BY MASS SPECTROMETRY [LARGE SCALE ANALYSIS]</scope>
    <source>
        <tissue>Cervix carcinoma</tissue>
        <tissue>Erythroleukemia</tissue>
    </source>
</reference>
<reference key="15">
    <citation type="journal article" date="2014" name="J. Proteomics">
        <title>An enzyme assisted RP-RPLC approach for in-depth analysis of human liver phosphoproteome.</title>
        <authorList>
            <person name="Bian Y."/>
            <person name="Song C."/>
            <person name="Cheng K."/>
            <person name="Dong M."/>
            <person name="Wang F."/>
            <person name="Huang J."/>
            <person name="Sun D."/>
            <person name="Wang L."/>
            <person name="Ye M."/>
            <person name="Zou H."/>
        </authorList>
    </citation>
    <scope>IDENTIFICATION BY MASS SPECTROMETRY [LARGE SCALE ANALYSIS]</scope>
    <source>
        <tissue>Liver</tissue>
    </source>
</reference>
<reference key="16">
    <citation type="journal article" date="2014" name="Nat. Struct. Mol. Biol.">
        <title>Uncovering global SUMOylation signaling networks in a site-specific manner.</title>
        <authorList>
            <person name="Hendriks I.A."/>
            <person name="D'Souza R.C."/>
            <person name="Yang B."/>
            <person name="Verlaan-de Vries M."/>
            <person name="Mann M."/>
            <person name="Vertegaal A.C."/>
        </authorList>
    </citation>
    <scope>SUMOYLATION [LARGE SCALE ANALYSIS] AT LYS-890</scope>
    <scope>IDENTIFICATION BY MASS SPECTROMETRY [LARGE SCALE ANALYSIS]</scope>
</reference>
<reference key="17">
    <citation type="journal article" date="2015" name="Cell Rep.">
        <title>SUMO-2 orchestrates chromatin modifiers in response to DNA damage.</title>
        <authorList>
            <person name="Hendriks I.A."/>
            <person name="Treffers L.W."/>
            <person name="Verlaan-de Vries M."/>
            <person name="Olsen J.V."/>
            <person name="Vertegaal A.C."/>
        </authorList>
    </citation>
    <scope>SUMOYLATION [LARGE SCALE ANALYSIS] AT LYS-890</scope>
    <scope>IDENTIFICATION BY MASS SPECTROMETRY [LARGE SCALE ANALYSIS]</scope>
</reference>
<reference key="18">
    <citation type="journal article" date="2015" name="Nat. Cell Biol.">
        <title>Local generation of fumarate promotes DNA repair through inhibition of histone H3 demethylation.</title>
        <authorList>
            <person name="Jiang Y."/>
            <person name="Qian X."/>
            <person name="Shen J."/>
            <person name="Wang Y."/>
            <person name="Li X."/>
            <person name="Liu R."/>
            <person name="Xia Y."/>
            <person name="Chen Q."/>
            <person name="Peng G."/>
            <person name="Lin S.Y."/>
            <person name="Lu Z."/>
        </authorList>
    </citation>
    <scope>FUNCTION</scope>
    <scope>CATALYTIC ACTIVITY</scope>
    <scope>ACTIVITY REGULATION</scope>
</reference>
<reference key="19">
    <citation type="journal article" date="2015" name="Mol. Cell. Proteomics">
        <title>System-wide analysis of SUMOylation dynamics in response to replication stress reveals novel small ubiquitin-like modified target proteins and acceptor lysines relevant for genome stability.</title>
        <authorList>
            <person name="Xiao Z."/>
            <person name="Chang J.G."/>
            <person name="Hendriks I.A."/>
            <person name="Sigurdsson J.O."/>
            <person name="Olsen J.V."/>
            <person name="Vertegaal A.C."/>
        </authorList>
    </citation>
    <scope>SUMOYLATION [LARGE SCALE ANALYSIS] AT LYS-890</scope>
    <scope>IDENTIFICATION BY MASS SPECTROMETRY [LARGE SCALE ANALYSIS]</scope>
</reference>
<reference key="20">
    <citation type="journal article" date="2017" name="Nat. Struct. Mol. Biol.">
        <title>Site-specific mapping of the human SUMO proteome reveals co-modification with phosphorylation.</title>
        <authorList>
            <person name="Hendriks I.A."/>
            <person name="Lyon D."/>
            <person name="Young C."/>
            <person name="Jensen L.J."/>
            <person name="Vertegaal A.C."/>
            <person name="Nielsen M.L."/>
        </authorList>
    </citation>
    <scope>SUMOYLATION [LARGE SCALE ANALYSIS] AT LYS-857 AND LYS-890</scope>
    <scope>IDENTIFICATION BY MASS SPECTROMETRY [LARGE SCALE ANALYSIS]</scope>
</reference>
<reference evidence="21" key="21">
    <citation type="journal article" date="2016" name="Structure">
        <title>KDM2B Recruitment of the Polycomb Group Complex, PRC1.1, Requires Cooperation between PCGF1 and BCORL1.</title>
        <authorList>
            <person name="Wong S.J."/>
            <person name="Gearhart M.D."/>
            <person name="Taylor A.B."/>
            <person name="Nanyes D.R."/>
            <person name="Ha D.J."/>
            <person name="Robinson A.K."/>
            <person name="Artigas J.A."/>
            <person name="Lee O.J."/>
            <person name="Demeler B."/>
            <person name="Hart P.J."/>
            <person name="Bardwell V.J."/>
            <person name="Kim C.A."/>
        </authorList>
    </citation>
    <scope>X-RAY CRYSTALLOGRAPHY (2.55 ANGSTROMS) OF 1059-1336</scope>
    <scope>SUBUNIT</scope>
</reference>
<reference evidence="22" key="22">
    <citation type="journal article" date="2018" name="Structure">
        <title>A Structure-Based Strategy for Engineering Selective Ubiquitin Variant Inhibitors of Skp1-Cul1-F-Box Ubiquitin Ligases.</title>
        <authorList>
            <person name="Gorelik M."/>
            <person name="Manczyk N."/>
            <person name="Pavlenco A."/>
            <person name="Kurinov I."/>
            <person name="Sidhu S.S."/>
            <person name="Sicheri F."/>
        </authorList>
    </citation>
    <scope>X-RAY CRYSTALLOGRAPHY (2.66 ANGSTROMS) OF 1060-1104 IN COMPLEX WITH SKP1 AND UBB</scope>
    <scope>INTERACTION OF SKP1-KDM2B COMPLEX WITH UBB</scope>
    <scope>MUTAGENESIS OF VAL-1064; VAL-1069 AND ALA-1072</scope>
</reference>
<reference evidence="20" key="23">
    <citation type="journal article" date="2018" name="Structure">
        <title>DNA Sequence Recognition of Human CXXC Domains and Their Structural Determinants.</title>
        <authorList>
            <person name="Xu C."/>
            <person name="Liu K."/>
            <person name="Lei M."/>
            <person name="Yang A."/>
            <person name="Li Y."/>
            <person name="Hughes T.R."/>
            <person name="Min J."/>
        </authorList>
    </citation>
    <scope>X-RAY CRYSTALLOGRAPHY (2.13 ANGSTROMS) OF 607-723</scope>
    <scope>DOMAIN CXXC-TYPE ZINC-FINGER</scope>
    <scope>ZINC-BINDING</scope>
</reference>
<proteinExistence type="evidence at protein level"/>
<name>KDM2B_HUMAN</name>